<comment type="function">
    <text evidence="1">F(1)F(0) ATP synthase produces ATP from ADP in the presence of a proton or sodium gradient. F-type ATPases consist of two structural domains, F(1) containing the extramembraneous catalytic core and F(0) containing the membrane proton channel, linked together by a central stalk and a peripheral stalk. During catalysis, ATP synthesis in the catalytic domain of F(1) is coupled via a rotary mechanism of the central stalk subunits to proton translocation.</text>
</comment>
<comment type="function">
    <text evidence="1">Component of the F(0) channel, it forms part of the peripheral stalk, linking F(1) to F(0).</text>
</comment>
<comment type="subunit">
    <text evidence="1">F-type ATPases have 2 components, F(1) - the catalytic core - and F(0) - the membrane proton channel. F(1) has five subunits: alpha(3), beta(3), gamma(1), delta(1), epsilon(1). F(0) has three main subunits: a(1), b(2) and c(10-14). The alpha and beta chains form an alternating ring which encloses part of the gamma chain. F(1) is attached to F(0) by a central stalk formed by the gamma and epsilon chains, while a peripheral stalk is formed by the delta and b chains.</text>
</comment>
<comment type="subcellular location">
    <subcellularLocation>
        <location evidence="1">Cell inner membrane</location>
        <topology evidence="1">Single-pass membrane protein</topology>
    </subcellularLocation>
</comment>
<comment type="similarity">
    <text evidence="1">Belongs to the ATPase B chain family.</text>
</comment>
<feature type="chain" id="PRO_0000368374" description="ATP synthase subunit b 1">
    <location>
        <begin position="1"/>
        <end position="208"/>
    </location>
</feature>
<feature type="transmembrane region" description="Helical" evidence="1">
    <location>
        <begin position="56"/>
        <end position="78"/>
    </location>
</feature>
<feature type="region of interest" description="Disordered" evidence="2">
    <location>
        <begin position="1"/>
        <end position="26"/>
    </location>
</feature>
<feature type="compositionally biased region" description="Polar residues" evidence="2">
    <location>
        <begin position="1"/>
        <end position="18"/>
    </location>
</feature>
<keyword id="KW-0066">ATP synthesis</keyword>
<keyword id="KW-0997">Cell inner membrane</keyword>
<keyword id="KW-1003">Cell membrane</keyword>
<keyword id="KW-0138">CF(0)</keyword>
<keyword id="KW-0375">Hydrogen ion transport</keyword>
<keyword id="KW-0406">Ion transport</keyword>
<keyword id="KW-0472">Membrane</keyword>
<keyword id="KW-0812">Transmembrane</keyword>
<keyword id="KW-1133">Transmembrane helix</keyword>
<keyword id="KW-0813">Transport</keyword>
<sequence>MFVSTAFAQTATESQPASTAGEHGAADAVHTETGVAHDAGHGSGVFPPFDSTHYASQVLWLAITFGLFYLFLSRVVLPRIGGVIETRRDRIAQDLEQAARLKQDADNAIAAYEQELAQARSKAASIAEAAREKGKGEADAERASAEAVLESKLKEAEERIAAIKAKAMSDVGNIAEETTATIVEQLLGLTADKASVSEAVKAIRASNA</sequence>
<gene>
    <name evidence="1" type="primary">atpF1</name>
    <name type="ordered locus">BR0384</name>
    <name type="ordered locus">BS1330_I0385</name>
</gene>
<protein>
    <recommendedName>
        <fullName evidence="1">ATP synthase subunit b 1</fullName>
    </recommendedName>
    <alternativeName>
        <fullName evidence="1">ATP synthase F(0) sector subunit b 1</fullName>
    </alternativeName>
    <alternativeName>
        <fullName evidence="1">ATPase subunit I 1</fullName>
    </alternativeName>
    <alternativeName>
        <fullName evidence="1">F-type ATPase subunit b 1</fullName>
        <shortName evidence="1">F-ATPase subunit b 1</shortName>
    </alternativeName>
</protein>
<accession>Q8G2D9</accession>
<accession>G0K6K6</accession>
<organism>
    <name type="scientific">Brucella suis biovar 1 (strain 1330)</name>
    <dbReference type="NCBI Taxonomy" id="204722"/>
    <lineage>
        <taxon>Bacteria</taxon>
        <taxon>Pseudomonadati</taxon>
        <taxon>Pseudomonadota</taxon>
        <taxon>Alphaproteobacteria</taxon>
        <taxon>Hyphomicrobiales</taxon>
        <taxon>Brucellaceae</taxon>
        <taxon>Brucella/Ochrobactrum group</taxon>
        <taxon>Brucella</taxon>
    </lineage>
</organism>
<reference key="1">
    <citation type="journal article" date="2002" name="Proc. Natl. Acad. Sci. U.S.A.">
        <title>The Brucella suis genome reveals fundamental similarities between animal and plant pathogens and symbionts.</title>
        <authorList>
            <person name="Paulsen I.T."/>
            <person name="Seshadri R."/>
            <person name="Nelson K.E."/>
            <person name="Eisen J.A."/>
            <person name="Heidelberg J.F."/>
            <person name="Read T.D."/>
            <person name="Dodson R.J."/>
            <person name="Umayam L.A."/>
            <person name="Brinkac L.M."/>
            <person name="Beanan M.J."/>
            <person name="Daugherty S.C."/>
            <person name="DeBoy R.T."/>
            <person name="Durkin A.S."/>
            <person name="Kolonay J.F."/>
            <person name="Madupu R."/>
            <person name="Nelson W.C."/>
            <person name="Ayodeji B."/>
            <person name="Kraul M."/>
            <person name="Shetty J."/>
            <person name="Malek J.A."/>
            <person name="Van Aken S.E."/>
            <person name="Riedmuller S."/>
            <person name="Tettelin H."/>
            <person name="Gill S.R."/>
            <person name="White O."/>
            <person name="Salzberg S.L."/>
            <person name="Hoover D.L."/>
            <person name="Lindler L.E."/>
            <person name="Halling S.M."/>
            <person name="Boyle S.M."/>
            <person name="Fraser C.M."/>
        </authorList>
    </citation>
    <scope>NUCLEOTIDE SEQUENCE [LARGE SCALE GENOMIC DNA]</scope>
    <source>
        <strain>1330</strain>
    </source>
</reference>
<reference key="2">
    <citation type="journal article" date="2011" name="J. Bacteriol.">
        <title>Revised genome sequence of Brucella suis 1330.</title>
        <authorList>
            <person name="Tae H."/>
            <person name="Shallom S."/>
            <person name="Settlage R."/>
            <person name="Preston D."/>
            <person name="Adams L.G."/>
            <person name="Garner H.R."/>
        </authorList>
    </citation>
    <scope>NUCLEOTIDE SEQUENCE [LARGE SCALE GENOMIC DNA]</scope>
    <source>
        <strain>1330</strain>
    </source>
</reference>
<proteinExistence type="inferred from homology"/>
<evidence type="ECO:0000255" key="1">
    <source>
        <dbReference type="HAMAP-Rule" id="MF_01398"/>
    </source>
</evidence>
<evidence type="ECO:0000256" key="2">
    <source>
        <dbReference type="SAM" id="MobiDB-lite"/>
    </source>
</evidence>
<name>ATPF1_BRUSU</name>
<dbReference type="EMBL" id="AE014291">
    <property type="protein sequence ID" value="AAN29330.1"/>
    <property type="molecule type" value="Genomic_DNA"/>
</dbReference>
<dbReference type="EMBL" id="CP002997">
    <property type="protein sequence ID" value="AEM17743.1"/>
    <property type="molecule type" value="Genomic_DNA"/>
</dbReference>
<dbReference type="RefSeq" id="WP_002963545.1">
    <property type="nucleotide sequence ID" value="NZ_KN046804.1"/>
</dbReference>
<dbReference type="SMR" id="Q8G2D9"/>
<dbReference type="KEGG" id="bms:BR0384"/>
<dbReference type="KEGG" id="bsi:BS1330_I0385"/>
<dbReference type="PATRIC" id="fig|204722.21.peg.3598"/>
<dbReference type="HOGENOM" id="CLU_079215_1_2_5"/>
<dbReference type="PhylomeDB" id="Q8G2D9"/>
<dbReference type="Proteomes" id="UP000007104">
    <property type="component" value="Chromosome I"/>
</dbReference>
<dbReference type="GO" id="GO:0005886">
    <property type="term" value="C:plasma membrane"/>
    <property type="evidence" value="ECO:0007669"/>
    <property type="project" value="UniProtKB-SubCell"/>
</dbReference>
<dbReference type="GO" id="GO:0045259">
    <property type="term" value="C:proton-transporting ATP synthase complex"/>
    <property type="evidence" value="ECO:0007669"/>
    <property type="project" value="UniProtKB-KW"/>
</dbReference>
<dbReference type="GO" id="GO:0046933">
    <property type="term" value="F:proton-transporting ATP synthase activity, rotational mechanism"/>
    <property type="evidence" value="ECO:0007669"/>
    <property type="project" value="UniProtKB-UniRule"/>
</dbReference>
<dbReference type="GO" id="GO:0046961">
    <property type="term" value="F:proton-transporting ATPase activity, rotational mechanism"/>
    <property type="evidence" value="ECO:0007669"/>
    <property type="project" value="TreeGrafter"/>
</dbReference>
<dbReference type="CDD" id="cd06503">
    <property type="entry name" value="ATP-synt_Fo_b"/>
    <property type="match status" value="1"/>
</dbReference>
<dbReference type="Gene3D" id="6.10.250.1580">
    <property type="match status" value="1"/>
</dbReference>
<dbReference type="HAMAP" id="MF_01398">
    <property type="entry name" value="ATP_synth_b_bprime"/>
    <property type="match status" value="1"/>
</dbReference>
<dbReference type="InterPro" id="IPR002146">
    <property type="entry name" value="ATP_synth_b/b'su_bac/chlpt"/>
</dbReference>
<dbReference type="InterPro" id="IPR050059">
    <property type="entry name" value="ATP_synthase_B_chain"/>
</dbReference>
<dbReference type="NCBIfam" id="NF006612">
    <property type="entry name" value="PRK09174.1"/>
    <property type="match status" value="1"/>
</dbReference>
<dbReference type="PANTHER" id="PTHR33445:SF1">
    <property type="entry name" value="ATP SYNTHASE SUBUNIT B"/>
    <property type="match status" value="1"/>
</dbReference>
<dbReference type="PANTHER" id="PTHR33445">
    <property type="entry name" value="ATP SYNTHASE SUBUNIT B', CHLOROPLASTIC"/>
    <property type="match status" value="1"/>
</dbReference>
<dbReference type="Pfam" id="PF00430">
    <property type="entry name" value="ATP-synt_B"/>
    <property type="match status" value="1"/>
</dbReference>